<organism>
    <name type="scientific">Struthio camelus</name>
    <name type="common">Common ostrich</name>
    <dbReference type="NCBI Taxonomy" id="8801"/>
    <lineage>
        <taxon>Eukaryota</taxon>
        <taxon>Metazoa</taxon>
        <taxon>Chordata</taxon>
        <taxon>Craniata</taxon>
        <taxon>Vertebrata</taxon>
        <taxon>Euteleostomi</taxon>
        <taxon>Archelosauria</taxon>
        <taxon>Archosauria</taxon>
        <taxon>Dinosauria</taxon>
        <taxon>Saurischia</taxon>
        <taxon>Theropoda</taxon>
        <taxon>Coelurosauria</taxon>
        <taxon>Aves</taxon>
        <taxon>Palaeognathae</taxon>
        <taxon>Struthioniformes</taxon>
        <taxon>Struthionidae</taxon>
        <taxon>Struthio</taxon>
    </lineage>
</organism>
<keyword id="KW-0007">Acetylation</keyword>
<keyword id="KW-0903">Direct protein sequencing</keyword>
<keyword id="KW-0249">Electron transport</keyword>
<keyword id="KW-0349">Heme</keyword>
<keyword id="KW-0408">Iron</keyword>
<keyword id="KW-0479">Metal-binding</keyword>
<keyword id="KW-0496">Mitochondrion</keyword>
<keyword id="KW-0679">Respiratory chain</keyword>
<keyword id="KW-0813">Transport</keyword>
<sequence>MGDIEKGKKIFVQKCSQCHTVEKGGKHKTGPNLDGLFGRKTGQAEGFSYTDANKNKGITWGEDTLMEYLENPKKYIPGTKMIFAGIKKKSERADLIAYLKDATSK</sequence>
<proteinExistence type="evidence at protein level"/>
<protein>
    <recommendedName>
        <fullName>Cytochrome c</fullName>
    </recommendedName>
</protein>
<accession>P00019</accession>
<reference key="1">
    <citation type="journal article" date="1974" name="Comp. Biochem. Physiol.">
        <title>The amino acid sequence of ostrich (Struthio camelus) cytochrome c.</title>
        <authorList>
            <person name="Howard N.L."/>
            <person name="Joubert F.J."/>
            <person name="Strydom D.J."/>
        </authorList>
    </citation>
    <scope>PROTEIN SEQUENCE OF 2-105</scope>
    <scope>ACETYLATION AT GLY-2</scope>
</reference>
<gene>
    <name type="primary">CYC</name>
</gene>
<comment type="function">
    <text>Electron carrier protein. The oxidized form of the cytochrome c heme group can accept an electron from the heme group of the cytochrome c1 subunit of cytochrome reductase. Cytochrome c then transfers this electron to the cytochrome oxidase complex, the final protein carrier in the mitochondrial electron-transport chain.</text>
</comment>
<comment type="subcellular location">
    <subcellularLocation>
        <location>Mitochondrion intermembrane space</location>
    </subcellularLocation>
    <text>Loosely associated with the inner membrane.</text>
</comment>
<comment type="PTM">
    <text>Binds 1 heme c group covalently per subunit.</text>
</comment>
<comment type="similarity">
    <text evidence="3">Belongs to the cytochrome c family.</text>
</comment>
<comment type="online information" name="Protein Spotlight">
    <link uri="https://www.proteinspotlight.org/back_issues/076"/>
    <text>Life shuttle - Issue 76 of November 2006</text>
</comment>
<feature type="initiator methionine" description="Removed" evidence="2">
    <location>
        <position position="1"/>
    </location>
</feature>
<feature type="chain" id="PRO_0000108243" description="Cytochrome c">
    <location>
        <begin position="2"/>
        <end position="105"/>
    </location>
</feature>
<feature type="binding site" description="covalent" evidence="1 2">
    <location>
        <position position="15"/>
    </location>
    <ligand>
        <name>heme c</name>
        <dbReference type="ChEBI" id="CHEBI:61717"/>
    </ligand>
</feature>
<feature type="binding site" description="covalent" evidence="1 2">
    <location>
        <position position="18"/>
    </location>
    <ligand>
        <name>heme c</name>
        <dbReference type="ChEBI" id="CHEBI:61717"/>
    </ligand>
</feature>
<feature type="binding site" description="axial binding residue">
    <location>
        <position position="19"/>
    </location>
    <ligand>
        <name>heme c</name>
        <dbReference type="ChEBI" id="CHEBI:61717"/>
    </ligand>
    <ligandPart>
        <name>Fe</name>
        <dbReference type="ChEBI" id="CHEBI:18248"/>
    </ligandPart>
</feature>
<feature type="binding site" description="axial binding residue">
    <location>
        <position position="81"/>
    </location>
    <ligand>
        <name>heme c</name>
        <dbReference type="ChEBI" id="CHEBI:61717"/>
    </ligand>
    <ligandPart>
        <name>Fe</name>
        <dbReference type="ChEBI" id="CHEBI:18248"/>
    </ligandPart>
</feature>
<feature type="modified residue" description="N-acetylglycine" evidence="2">
    <location>
        <position position="2"/>
    </location>
</feature>
<dbReference type="PIR" id="A00016">
    <property type="entry name" value="CCOS"/>
</dbReference>
<dbReference type="SMR" id="P00019"/>
<dbReference type="iPTMnet" id="P00019"/>
<dbReference type="GO" id="GO:0005758">
    <property type="term" value="C:mitochondrial intermembrane space"/>
    <property type="evidence" value="ECO:0007669"/>
    <property type="project" value="UniProtKB-SubCell"/>
</dbReference>
<dbReference type="GO" id="GO:0009055">
    <property type="term" value="F:electron transfer activity"/>
    <property type="evidence" value="ECO:0007669"/>
    <property type="project" value="InterPro"/>
</dbReference>
<dbReference type="GO" id="GO:0020037">
    <property type="term" value="F:heme binding"/>
    <property type="evidence" value="ECO:0007669"/>
    <property type="project" value="InterPro"/>
</dbReference>
<dbReference type="GO" id="GO:0046872">
    <property type="term" value="F:metal ion binding"/>
    <property type="evidence" value="ECO:0007669"/>
    <property type="project" value="UniProtKB-KW"/>
</dbReference>
<dbReference type="FunFam" id="1.10.760.10:FF:000008">
    <property type="entry name" value="Cytochrome c"/>
    <property type="match status" value="1"/>
</dbReference>
<dbReference type="Gene3D" id="1.10.760.10">
    <property type="entry name" value="Cytochrome c-like domain"/>
    <property type="match status" value="1"/>
</dbReference>
<dbReference type="InterPro" id="IPR009056">
    <property type="entry name" value="Cyt_c-like_dom"/>
</dbReference>
<dbReference type="InterPro" id="IPR036909">
    <property type="entry name" value="Cyt_c-like_dom_sf"/>
</dbReference>
<dbReference type="InterPro" id="IPR002327">
    <property type="entry name" value="Cyt_c_1A/1B"/>
</dbReference>
<dbReference type="PANTHER" id="PTHR11961">
    <property type="entry name" value="CYTOCHROME C"/>
    <property type="match status" value="1"/>
</dbReference>
<dbReference type="Pfam" id="PF00034">
    <property type="entry name" value="Cytochrom_C"/>
    <property type="match status" value="1"/>
</dbReference>
<dbReference type="PRINTS" id="PR00604">
    <property type="entry name" value="CYTCHRMECIAB"/>
</dbReference>
<dbReference type="SUPFAM" id="SSF46626">
    <property type="entry name" value="Cytochrome c"/>
    <property type="match status" value="1"/>
</dbReference>
<dbReference type="PROSITE" id="PS51007">
    <property type="entry name" value="CYTC"/>
    <property type="match status" value="1"/>
</dbReference>
<evidence type="ECO:0000255" key="1">
    <source>
        <dbReference type="PROSITE-ProRule" id="PRU00433"/>
    </source>
</evidence>
<evidence type="ECO:0000269" key="2">
    <source>
    </source>
</evidence>
<evidence type="ECO:0000305" key="3"/>
<name>CYC_STRCA</name>